<feature type="initiator methionine" description="Removed" evidence="1">
    <location>
        <position position="1"/>
    </location>
</feature>
<feature type="chain" id="PRO_0000457555" description="PAT complex subunit Asterix">
    <location>
        <begin position="2"/>
        <end position="106"/>
    </location>
</feature>
<feature type="topological domain" description="Cytoplasmic" evidence="3 5 6">
    <location>
        <begin position="2"/>
        <end position="32"/>
    </location>
</feature>
<feature type="transmembrane region" description="Helical" evidence="3 5 6">
    <location>
        <begin position="33"/>
        <end position="51"/>
    </location>
</feature>
<feature type="topological domain" description="Lumenal" evidence="3 5 6">
    <location>
        <position position="52"/>
    </location>
</feature>
<feature type="transmembrane region" description="Helical" evidence="3 5 6">
    <location>
        <begin position="53"/>
        <end position="70"/>
    </location>
</feature>
<feature type="topological domain" description="Cytoplasmic" evidence="3 5 6">
    <location>
        <begin position="71"/>
        <end position="74"/>
    </location>
</feature>
<feature type="transmembrane region" description="Helical" evidence="3 5 6">
    <location>
        <begin position="75"/>
        <end position="95"/>
    </location>
</feature>
<feature type="topological domain" description="Lumenal" evidence="3 5 6">
    <location>
        <begin position="96"/>
        <end position="106"/>
    </location>
</feature>
<feature type="region of interest" description="Disordered" evidence="2">
    <location>
        <begin position="1"/>
        <end position="29"/>
    </location>
</feature>
<feature type="modified residue" description="N-acetylserine" evidence="1">
    <location>
        <position position="2"/>
    </location>
</feature>
<evidence type="ECO:0000250" key="1">
    <source>
        <dbReference type="UniProtKB" id="Q9Y284"/>
    </source>
</evidence>
<evidence type="ECO:0000256" key="2">
    <source>
        <dbReference type="SAM" id="MobiDB-lite"/>
    </source>
</evidence>
<evidence type="ECO:0000269" key="3">
    <source>
    </source>
</evidence>
<evidence type="ECO:0000305" key="4"/>
<evidence type="ECO:0007744" key="5">
    <source>
        <dbReference type="PDB" id="7TM3"/>
    </source>
</evidence>
<evidence type="ECO:0007744" key="6">
    <source>
        <dbReference type="PDB" id="7TUT"/>
    </source>
</evidence>
<proteinExistence type="evidence at protein level"/>
<name>ASTER_CANLF</name>
<organism>
    <name type="scientific">Canis lupus familiaris</name>
    <name type="common">Dog</name>
    <name type="synonym">Canis familiaris</name>
    <dbReference type="NCBI Taxonomy" id="9615"/>
    <lineage>
        <taxon>Eukaryota</taxon>
        <taxon>Metazoa</taxon>
        <taxon>Chordata</taxon>
        <taxon>Craniata</taxon>
        <taxon>Vertebrata</taxon>
        <taxon>Euteleostomi</taxon>
        <taxon>Mammalia</taxon>
        <taxon>Eutheria</taxon>
        <taxon>Laurasiatheria</taxon>
        <taxon>Carnivora</taxon>
        <taxon>Caniformia</taxon>
        <taxon>Canidae</taxon>
        <taxon>Canis</taxon>
    </lineage>
</organism>
<protein>
    <recommendedName>
        <fullName evidence="4">PAT complex subunit Asterix</fullName>
    </recommendedName>
    <alternativeName>
        <fullName>Protein WDR83OS homolog</fullName>
    </alternativeName>
</protein>
<comment type="function">
    <text evidence="3">Component of the multi-pass translocon (MPT) complex that mediates insertion of multi-pass membrane proteins into the lipid bilayer of membranes (PubMed:36261528). The MPT complex takes over after the SEC61 complex: following membrane insertion of the first few transmembrane segments of proteins by the SEC61 complex, the MPT complex occludes the lateral gate of the SEC61 complex to promote insertion of subsequent transmembrane regions (PubMed:36261528). Within the MPT complex, the PAT subcomplex sequesters any highly polar regions in the transmembrane domains away from the non-polar membrane environment until they can be buried in the interior of the fully assembled protein (PubMed:36261528). Within the PAT subcomplex, WDR83OS/Asterix binds to and redirects the substrate to a location behind the SEC61 complex (PubMed:36261528).</text>
</comment>
<comment type="subunit">
    <text evidence="3">Component of the PAT complex, composed of WDR83OS/Asterix and CCDC47 (PubMed:36261528). The PAT complex is part of the multi-pass translocon (MPT) complex, composed of three subcomplexes, the GEL complex (composed of RAB5IF/OPTI and TMCO1), the BOS complex (composed of NCLN/Nicalin, NOMO1 and TMEM147) and the PAT complex (composed of WDR83OS/Asterix and CCDC47) (PubMed:36261528). The MPT complex associates with the SEC61 complex (PubMed:36261528).</text>
</comment>
<comment type="subcellular location">
    <subcellularLocation>
        <location evidence="3">Endoplasmic reticulum membrane</location>
        <topology evidence="3">Multi-pass membrane protein</topology>
    </subcellularLocation>
</comment>
<comment type="similarity">
    <text evidence="4">Belongs to the Asterix family.</text>
</comment>
<dbReference type="RefSeq" id="XP_038284419.1">
    <property type="nucleotide sequence ID" value="XM_038428491.1"/>
</dbReference>
<dbReference type="RefSeq" id="XP_038423090.1">
    <property type="nucleotide sequence ID" value="XM_038567162.1"/>
</dbReference>
<dbReference type="RefSeq" id="XP_533908.1">
    <property type="nucleotide sequence ID" value="XM_533908.7"/>
</dbReference>
<dbReference type="PDB" id="7TM3">
    <property type="method" value="EM"/>
    <property type="resolution" value="3.88 A"/>
    <property type="chains" value="5=1-106"/>
</dbReference>
<dbReference type="PDB" id="7TUT">
    <property type="method" value="EM"/>
    <property type="resolution" value="3.88 A"/>
    <property type="chains" value="5=1-106"/>
</dbReference>
<dbReference type="PDBsum" id="7TM3"/>
<dbReference type="PDBsum" id="7TUT"/>
<dbReference type="SMR" id="A0A8I3NQW8"/>
<dbReference type="FunCoup" id="A0A8I3NQW8">
    <property type="interactions" value="959"/>
</dbReference>
<dbReference type="Ensembl" id="ENSCAFT00000027319.5">
    <property type="protein sequence ID" value="ENSCAFP00000025406.3"/>
    <property type="gene ID" value="ENSCAFG00000028908.3"/>
</dbReference>
<dbReference type="Ensembl" id="ENSCAFT00030037273.1">
    <property type="protein sequence ID" value="ENSCAFP00030032516.1"/>
    <property type="gene ID" value="ENSCAFG00030020299.1"/>
</dbReference>
<dbReference type="Ensembl" id="ENSCAFT00040045596.1">
    <property type="protein sequence ID" value="ENSCAFP00040039809.1"/>
    <property type="gene ID" value="ENSCAFG00040024485.1"/>
</dbReference>
<dbReference type="Ensembl" id="ENSCAFT00805051589">
    <property type="protein sequence ID" value="ENSCAFP00805040411"/>
    <property type="gene ID" value="ENSCAFG00805028478"/>
</dbReference>
<dbReference type="Ensembl" id="ENSCAFT00845030001.1">
    <property type="protein sequence ID" value="ENSCAFP00845023539.1"/>
    <property type="gene ID" value="ENSCAFG00845016928.1"/>
</dbReference>
<dbReference type="GeneID" id="476703"/>
<dbReference type="KEGG" id="cfa:476703"/>
<dbReference type="CTD" id="51398"/>
<dbReference type="GeneTree" id="ENSGT00390000002121"/>
<dbReference type="OMA" id="MFGLMMK"/>
<dbReference type="OrthoDB" id="284718at2759"/>
<dbReference type="Proteomes" id="UP000002254">
    <property type="component" value="Chromosome 20"/>
</dbReference>
<dbReference type="Proteomes" id="UP000694429">
    <property type="component" value="Chromosome 20"/>
</dbReference>
<dbReference type="Proteomes" id="UP000694542">
    <property type="component" value="Chromosome 20"/>
</dbReference>
<dbReference type="Proteomes" id="UP000805418">
    <property type="component" value="Chromosome 20"/>
</dbReference>
<dbReference type="GO" id="GO:0005789">
    <property type="term" value="C:endoplasmic reticulum membrane"/>
    <property type="evidence" value="ECO:0000314"/>
    <property type="project" value="UniProtKB"/>
</dbReference>
<dbReference type="GO" id="GO:0160064">
    <property type="term" value="C:multi-pass translocon complex"/>
    <property type="evidence" value="ECO:0000314"/>
    <property type="project" value="UniProtKB"/>
</dbReference>
<dbReference type="GO" id="GO:0101031">
    <property type="term" value="C:protein folding chaperone complex"/>
    <property type="evidence" value="ECO:0007669"/>
    <property type="project" value="Ensembl"/>
</dbReference>
<dbReference type="GO" id="GO:0044183">
    <property type="term" value="F:protein folding chaperone"/>
    <property type="evidence" value="ECO:0000318"/>
    <property type="project" value="GO_Central"/>
</dbReference>
<dbReference type="GO" id="GO:0160063">
    <property type="term" value="P:multi-pass transmembrane protein insertion into ER membrane"/>
    <property type="evidence" value="ECO:0000314"/>
    <property type="project" value="UniProtKB"/>
</dbReference>
<dbReference type="GO" id="GO:0045048">
    <property type="term" value="P:protein insertion into ER membrane"/>
    <property type="evidence" value="ECO:0000318"/>
    <property type="project" value="GO_Central"/>
</dbReference>
<dbReference type="InterPro" id="IPR005351">
    <property type="entry name" value="ASTER"/>
</dbReference>
<dbReference type="PANTHER" id="PTHR13193">
    <property type="entry name" value="CGI-140"/>
    <property type="match status" value="1"/>
</dbReference>
<dbReference type="PANTHER" id="PTHR13193:SF0">
    <property type="entry name" value="PAT COMPLEX SUBUNIT ASTERIX"/>
    <property type="match status" value="1"/>
</dbReference>
<dbReference type="Pfam" id="PF03669">
    <property type="entry name" value="ASTER"/>
    <property type="match status" value="1"/>
</dbReference>
<reference key="1">
    <citation type="journal article" date="2005" name="Nature">
        <title>Genome sequence, comparative analysis and haplotype structure of the domestic dog.</title>
        <authorList>
            <person name="Lindblad-Toh K."/>
            <person name="Wade C.M."/>
            <person name="Mikkelsen T.S."/>
            <person name="Karlsson E.K."/>
            <person name="Jaffe D.B."/>
            <person name="Kamal M."/>
            <person name="Clamp M."/>
            <person name="Chang J.L."/>
            <person name="Kulbokas E.J. III"/>
            <person name="Zody M.C."/>
            <person name="Mauceli E."/>
            <person name="Xie X."/>
            <person name="Breen M."/>
            <person name="Wayne R.K."/>
            <person name="Ostrander E.A."/>
            <person name="Ponting C.P."/>
            <person name="Galibert F."/>
            <person name="Smith D.R."/>
            <person name="deJong P.J."/>
            <person name="Kirkness E.F."/>
            <person name="Alvarez P."/>
            <person name="Biagi T."/>
            <person name="Brockman W."/>
            <person name="Butler J."/>
            <person name="Chin C.-W."/>
            <person name="Cook A."/>
            <person name="Cuff J."/>
            <person name="Daly M.J."/>
            <person name="DeCaprio D."/>
            <person name="Gnerre S."/>
            <person name="Grabherr M."/>
            <person name="Kellis M."/>
            <person name="Kleber M."/>
            <person name="Bardeleben C."/>
            <person name="Goodstadt L."/>
            <person name="Heger A."/>
            <person name="Hitte C."/>
            <person name="Kim L."/>
            <person name="Koepfli K.-P."/>
            <person name="Parker H.G."/>
            <person name="Pollinger J.P."/>
            <person name="Searle S.M.J."/>
            <person name="Sutter N.B."/>
            <person name="Thomas R."/>
            <person name="Webber C."/>
            <person name="Baldwin J."/>
            <person name="Abebe A."/>
            <person name="Abouelleil A."/>
            <person name="Aftuck L."/>
            <person name="Ait-Zahra M."/>
            <person name="Aldredge T."/>
            <person name="Allen N."/>
            <person name="An P."/>
            <person name="Anderson S."/>
            <person name="Antoine C."/>
            <person name="Arachchi H."/>
            <person name="Aslam A."/>
            <person name="Ayotte L."/>
            <person name="Bachantsang P."/>
            <person name="Barry A."/>
            <person name="Bayul T."/>
            <person name="Benamara M."/>
            <person name="Berlin A."/>
            <person name="Bessette D."/>
            <person name="Blitshteyn B."/>
            <person name="Bloom T."/>
            <person name="Blye J."/>
            <person name="Boguslavskiy L."/>
            <person name="Bonnet C."/>
            <person name="Boukhgalter B."/>
            <person name="Brown A."/>
            <person name="Cahill P."/>
            <person name="Calixte N."/>
            <person name="Camarata J."/>
            <person name="Cheshatsang Y."/>
            <person name="Chu J."/>
            <person name="Citroen M."/>
            <person name="Collymore A."/>
            <person name="Cooke P."/>
            <person name="Dawoe T."/>
            <person name="Daza R."/>
            <person name="Decktor K."/>
            <person name="DeGray S."/>
            <person name="Dhargay N."/>
            <person name="Dooley K."/>
            <person name="Dooley K."/>
            <person name="Dorje P."/>
            <person name="Dorjee K."/>
            <person name="Dorris L."/>
            <person name="Duffey N."/>
            <person name="Dupes A."/>
            <person name="Egbiremolen O."/>
            <person name="Elong R."/>
            <person name="Falk J."/>
            <person name="Farina A."/>
            <person name="Faro S."/>
            <person name="Ferguson D."/>
            <person name="Ferreira P."/>
            <person name="Fisher S."/>
            <person name="FitzGerald M."/>
            <person name="Foley K."/>
            <person name="Foley C."/>
            <person name="Franke A."/>
            <person name="Friedrich D."/>
            <person name="Gage D."/>
            <person name="Garber M."/>
            <person name="Gearin G."/>
            <person name="Giannoukos G."/>
            <person name="Goode T."/>
            <person name="Goyette A."/>
            <person name="Graham J."/>
            <person name="Grandbois E."/>
            <person name="Gyaltsen K."/>
            <person name="Hafez N."/>
            <person name="Hagopian D."/>
            <person name="Hagos B."/>
            <person name="Hall J."/>
            <person name="Healy C."/>
            <person name="Hegarty R."/>
            <person name="Honan T."/>
            <person name="Horn A."/>
            <person name="Houde N."/>
            <person name="Hughes L."/>
            <person name="Hunnicutt L."/>
            <person name="Husby M."/>
            <person name="Jester B."/>
            <person name="Jones C."/>
            <person name="Kamat A."/>
            <person name="Kanga B."/>
            <person name="Kells C."/>
            <person name="Khazanovich D."/>
            <person name="Kieu A.C."/>
            <person name="Kisner P."/>
            <person name="Kumar M."/>
            <person name="Lance K."/>
            <person name="Landers T."/>
            <person name="Lara M."/>
            <person name="Lee W."/>
            <person name="Leger J.-P."/>
            <person name="Lennon N."/>
            <person name="Leuper L."/>
            <person name="LeVine S."/>
            <person name="Liu J."/>
            <person name="Liu X."/>
            <person name="Lokyitsang Y."/>
            <person name="Lokyitsang T."/>
            <person name="Lui A."/>
            <person name="Macdonald J."/>
            <person name="Major J."/>
            <person name="Marabella R."/>
            <person name="Maru K."/>
            <person name="Matthews C."/>
            <person name="McDonough S."/>
            <person name="Mehta T."/>
            <person name="Meldrim J."/>
            <person name="Melnikov A."/>
            <person name="Meneus L."/>
            <person name="Mihalev A."/>
            <person name="Mihova T."/>
            <person name="Miller K."/>
            <person name="Mittelman R."/>
            <person name="Mlenga V."/>
            <person name="Mulrain L."/>
            <person name="Munson G."/>
            <person name="Navidi A."/>
            <person name="Naylor J."/>
            <person name="Nguyen T."/>
            <person name="Nguyen N."/>
            <person name="Nguyen C."/>
            <person name="Nguyen T."/>
            <person name="Nicol R."/>
            <person name="Norbu N."/>
            <person name="Norbu C."/>
            <person name="Novod N."/>
            <person name="Nyima T."/>
            <person name="Olandt P."/>
            <person name="O'Neill B."/>
            <person name="O'Neill K."/>
            <person name="Osman S."/>
            <person name="Oyono L."/>
            <person name="Patti C."/>
            <person name="Perrin D."/>
            <person name="Phunkhang P."/>
            <person name="Pierre F."/>
            <person name="Priest M."/>
            <person name="Rachupka A."/>
            <person name="Raghuraman S."/>
            <person name="Rameau R."/>
            <person name="Ray V."/>
            <person name="Raymond C."/>
            <person name="Rege F."/>
            <person name="Rise C."/>
            <person name="Rogers J."/>
            <person name="Rogov P."/>
            <person name="Sahalie J."/>
            <person name="Settipalli S."/>
            <person name="Sharpe T."/>
            <person name="Shea T."/>
            <person name="Sheehan M."/>
            <person name="Sherpa N."/>
            <person name="Shi J."/>
            <person name="Shih D."/>
            <person name="Sloan J."/>
            <person name="Smith C."/>
            <person name="Sparrow T."/>
            <person name="Stalker J."/>
            <person name="Stange-Thomann N."/>
            <person name="Stavropoulos S."/>
            <person name="Stone C."/>
            <person name="Stone S."/>
            <person name="Sykes S."/>
            <person name="Tchuinga P."/>
            <person name="Tenzing P."/>
            <person name="Tesfaye S."/>
            <person name="Thoulutsang D."/>
            <person name="Thoulutsang Y."/>
            <person name="Topham K."/>
            <person name="Topping I."/>
            <person name="Tsamla T."/>
            <person name="Vassiliev H."/>
            <person name="Venkataraman V."/>
            <person name="Vo A."/>
            <person name="Wangchuk T."/>
            <person name="Wangdi T."/>
            <person name="Weiand M."/>
            <person name="Wilkinson J."/>
            <person name="Wilson A."/>
            <person name="Yadav S."/>
            <person name="Yang S."/>
            <person name="Yang X."/>
            <person name="Young G."/>
            <person name="Yu Q."/>
            <person name="Zainoun J."/>
            <person name="Zembek L."/>
            <person name="Zimmer A."/>
            <person name="Lander E.S."/>
        </authorList>
    </citation>
    <scope>NUCLEOTIDE SEQUENCE [LARGE SCALE GENOMIC DNA]</scope>
    <source>
        <strain>Boxer</strain>
    </source>
</reference>
<reference evidence="5 6" key="2">
    <citation type="journal article" date="2022" name="Nature">
        <title>Mechanism of an intramembrane chaperone for multipass membrane proteins.</title>
        <authorList>
            <person name="Smalinskaite L."/>
            <person name="Kim M.K."/>
            <person name="Lewis A.J.O."/>
            <person name="Keenan R.J."/>
            <person name="Hegde R.S."/>
        </authorList>
    </citation>
    <scope>STRUCTURE BY ELECTRON MICROSCOPY (3.88 ANGSTROMS) IN COMPLEX WITH THE MULTI-PASS TRANSLOCON COMPLEX</scope>
    <scope>FUNCTION</scope>
    <scope>IDENTIFICATION IN THE MULTI-PASS TRANSLOCON COMPLEX</scope>
    <scope>SUBCELLULAR LOCATION</scope>
</reference>
<gene>
    <name type="primary">WDR83OS</name>
</gene>
<keyword id="KW-0002">3D-structure</keyword>
<keyword id="KW-0007">Acetylation</keyword>
<keyword id="KW-0143">Chaperone</keyword>
<keyword id="KW-0256">Endoplasmic reticulum</keyword>
<keyword id="KW-0472">Membrane</keyword>
<keyword id="KW-1185">Reference proteome</keyword>
<keyword id="KW-0812">Transmembrane</keyword>
<keyword id="KW-1133">Transmembrane helix</keyword>
<sequence>MSTNNMSDPRRPNKVLRYKPPPSECNPALDDPTPDYMNLLGMIFSMCGLMLKLKWCAWVAVYCSFISFANSRSSEDTKQMMSSFMLSISAVVMSYLQNPQPMTPPW</sequence>
<accession>A0A8I3NQW8</accession>